<keyword id="KW-0012">Acyltransferase</keyword>
<keyword id="KW-0441">Lipid A biosynthesis</keyword>
<keyword id="KW-0444">Lipid biosynthesis</keyword>
<keyword id="KW-0443">Lipid metabolism</keyword>
<keyword id="KW-0677">Repeat</keyword>
<keyword id="KW-0808">Transferase</keyword>
<organism>
    <name type="scientific">Paramagnetospirillum magneticum (strain ATCC 700264 / AMB-1)</name>
    <name type="common">Magnetospirillum magneticum</name>
    <dbReference type="NCBI Taxonomy" id="342108"/>
    <lineage>
        <taxon>Bacteria</taxon>
        <taxon>Pseudomonadati</taxon>
        <taxon>Pseudomonadota</taxon>
        <taxon>Alphaproteobacteria</taxon>
        <taxon>Rhodospirillales</taxon>
        <taxon>Magnetospirillaceae</taxon>
        <taxon>Paramagnetospirillum</taxon>
    </lineage>
</organism>
<proteinExistence type="inferred from homology"/>
<dbReference type="EC" id="2.3.1.191" evidence="1"/>
<dbReference type="EMBL" id="AP007255">
    <property type="protein sequence ID" value="BAE51292.1"/>
    <property type="molecule type" value="Genomic_DNA"/>
</dbReference>
<dbReference type="RefSeq" id="WP_011384869.1">
    <property type="nucleotide sequence ID" value="NC_007626.1"/>
</dbReference>
<dbReference type="SMR" id="Q2W4D3"/>
<dbReference type="STRING" id="342108.amb2488"/>
<dbReference type="KEGG" id="mag:amb2488"/>
<dbReference type="HOGENOM" id="CLU_049865_0_2_5"/>
<dbReference type="OrthoDB" id="9784739at2"/>
<dbReference type="UniPathway" id="UPA00973"/>
<dbReference type="Proteomes" id="UP000007058">
    <property type="component" value="Chromosome"/>
</dbReference>
<dbReference type="GO" id="GO:0016020">
    <property type="term" value="C:membrane"/>
    <property type="evidence" value="ECO:0007669"/>
    <property type="project" value="GOC"/>
</dbReference>
<dbReference type="GO" id="GO:0016410">
    <property type="term" value="F:N-acyltransferase activity"/>
    <property type="evidence" value="ECO:0007669"/>
    <property type="project" value="InterPro"/>
</dbReference>
<dbReference type="GO" id="GO:0009245">
    <property type="term" value="P:lipid A biosynthetic process"/>
    <property type="evidence" value="ECO:0007669"/>
    <property type="project" value="UniProtKB-UniRule"/>
</dbReference>
<dbReference type="CDD" id="cd03352">
    <property type="entry name" value="LbH_LpxD"/>
    <property type="match status" value="1"/>
</dbReference>
<dbReference type="Gene3D" id="2.160.10.10">
    <property type="entry name" value="Hexapeptide repeat proteins"/>
    <property type="match status" value="1"/>
</dbReference>
<dbReference type="Gene3D" id="3.40.1390.10">
    <property type="entry name" value="MurE/MurF, N-terminal domain"/>
    <property type="match status" value="1"/>
</dbReference>
<dbReference type="HAMAP" id="MF_00523">
    <property type="entry name" value="LpxD"/>
    <property type="match status" value="1"/>
</dbReference>
<dbReference type="InterPro" id="IPR001451">
    <property type="entry name" value="Hexapep"/>
</dbReference>
<dbReference type="InterPro" id="IPR007691">
    <property type="entry name" value="LpxD"/>
</dbReference>
<dbReference type="InterPro" id="IPR011004">
    <property type="entry name" value="Trimer_LpxA-like_sf"/>
</dbReference>
<dbReference type="InterPro" id="IPR020573">
    <property type="entry name" value="UDP_GlcNAc_AcTrfase_non-rep"/>
</dbReference>
<dbReference type="NCBIfam" id="TIGR01853">
    <property type="entry name" value="lipid_A_lpxD"/>
    <property type="match status" value="1"/>
</dbReference>
<dbReference type="NCBIfam" id="NF002060">
    <property type="entry name" value="PRK00892.1"/>
    <property type="match status" value="1"/>
</dbReference>
<dbReference type="PANTHER" id="PTHR43378">
    <property type="entry name" value="UDP-3-O-ACYLGLUCOSAMINE N-ACYLTRANSFERASE"/>
    <property type="match status" value="1"/>
</dbReference>
<dbReference type="PANTHER" id="PTHR43378:SF2">
    <property type="entry name" value="UDP-3-O-ACYLGLUCOSAMINE N-ACYLTRANSFERASE 1, MITOCHONDRIAL-RELATED"/>
    <property type="match status" value="1"/>
</dbReference>
<dbReference type="Pfam" id="PF00132">
    <property type="entry name" value="Hexapep"/>
    <property type="match status" value="2"/>
</dbReference>
<dbReference type="Pfam" id="PF04613">
    <property type="entry name" value="LpxD"/>
    <property type="match status" value="1"/>
</dbReference>
<dbReference type="SUPFAM" id="SSF51161">
    <property type="entry name" value="Trimeric LpxA-like enzymes"/>
    <property type="match status" value="1"/>
</dbReference>
<protein>
    <recommendedName>
        <fullName evidence="1">UDP-3-O-acylglucosamine N-acyltransferase</fullName>
        <ecNumber evidence="1">2.3.1.191</ecNumber>
    </recommendedName>
</protein>
<accession>Q2W4D3</accession>
<reference key="1">
    <citation type="journal article" date="2005" name="DNA Res.">
        <title>Complete genome sequence of the facultative anaerobic magnetotactic bacterium Magnetospirillum sp. strain AMB-1.</title>
        <authorList>
            <person name="Matsunaga T."/>
            <person name="Okamura Y."/>
            <person name="Fukuda Y."/>
            <person name="Wahyudi A.T."/>
            <person name="Murase Y."/>
            <person name="Takeyama H."/>
        </authorList>
    </citation>
    <scope>NUCLEOTIDE SEQUENCE [LARGE SCALE GENOMIC DNA]</scope>
    <source>
        <strain>ATCC 700264 / AMB-1</strain>
    </source>
</reference>
<comment type="function">
    <text evidence="1">Catalyzes the N-acylation of UDP-3-O-acylglucosamine using 3-hydroxyacyl-ACP as the acyl donor. Is involved in the biosynthesis of lipid A, a phosphorylated glycolipid that anchors the lipopolysaccharide to the outer membrane of the cell.</text>
</comment>
<comment type="catalytic activity">
    <reaction evidence="1">
        <text>a UDP-3-O-[(3R)-3-hydroxyacyl]-alpha-D-glucosamine + a (3R)-hydroxyacyl-[ACP] = a UDP-2-N,3-O-bis[(3R)-3-hydroxyacyl]-alpha-D-glucosamine + holo-[ACP] + H(+)</text>
        <dbReference type="Rhea" id="RHEA:53836"/>
        <dbReference type="Rhea" id="RHEA-COMP:9685"/>
        <dbReference type="Rhea" id="RHEA-COMP:9945"/>
        <dbReference type="ChEBI" id="CHEBI:15378"/>
        <dbReference type="ChEBI" id="CHEBI:64479"/>
        <dbReference type="ChEBI" id="CHEBI:78827"/>
        <dbReference type="ChEBI" id="CHEBI:137740"/>
        <dbReference type="ChEBI" id="CHEBI:137748"/>
        <dbReference type="EC" id="2.3.1.191"/>
    </reaction>
</comment>
<comment type="pathway">
    <text evidence="1">Bacterial outer membrane biogenesis; LPS lipid A biosynthesis.</text>
</comment>
<comment type="subunit">
    <text evidence="1">Homotrimer.</text>
</comment>
<comment type="similarity">
    <text evidence="1">Belongs to the transferase hexapeptide repeat family. LpxD subfamily.</text>
</comment>
<feature type="chain" id="PRO_0000264393" description="UDP-3-O-acylglucosamine N-acyltransferase">
    <location>
        <begin position="1"/>
        <end position="339"/>
    </location>
</feature>
<feature type="active site" description="Proton acceptor" evidence="1">
    <location>
        <position position="251"/>
    </location>
</feature>
<gene>
    <name evidence="1" type="primary">lpxD</name>
    <name type="ordered locus">amb2488</name>
</gene>
<name>LPXD_PARM1</name>
<sequence>MADPRFFRVAGPFTLAQLAELSGASVAEGCDLGASFVDVAPLEQAGQDNVSFLDNRKYVGAFQASKAGLCVIAPEMADKAPEGMALLLSPDPYRAYARIAQAFYPNPAPEPWVAPTAWVDASAAVGEGCRIEPGAVIGAGARIGARCRIGANVVIGQGVVLGDDCTIGANATVSHALVGSRVNIYPGARIGQDGFGFAMGPQGHLKVPQLGRVLIGNNVEIGANTTIDRGAGPDTVIGDGSMIDNLVQIGHNVQLGRGCVIVAQVGISGSTRMGDFVAAGGQAGITGHLKIGAGAKIAAQAGVMRDIAPGETVGGAPAVPMADWLRQSAILGKMARKKS</sequence>
<evidence type="ECO:0000255" key="1">
    <source>
        <dbReference type="HAMAP-Rule" id="MF_00523"/>
    </source>
</evidence>